<reference key="1">
    <citation type="journal article" date="2017" name="Fungal Genet. Biol.">
        <title>Identification and characterization of the verticillin biosynthetic gene cluster in Clonostachys rogersoniana.</title>
        <authorList>
            <person name="Wang Y."/>
            <person name="Hu P."/>
            <person name="Pan Y."/>
            <person name="Zhu Y."/>
            <person name="Liu X."/>
            <person name="Che Y."/>
            <person name="Liu G."/>
        </authorList>
    </citation>
    <scope>NUCLEOTIDE SEQUENCE [GENOMIC DNA]</scope>
    <scope>FUNCTION</scope>
    <scope>PATHWAY</scope>
    <source>
        <strain>XZC04-CC-302</strain>
    </source>
</reference>
<reference key="2">
    <citation type="journal article" date="2017" name="Microbiology">
        <title>VerZ, a Zn(II)2Cys6 DNA-binding protein, regulates the biosynthesis of verticillin in Clonostachys rogersoniana.</title>
        <authorList>
            <person name="Guo Z."/>
            <person name="Hao T."/>
            <person name="Wang Y."/>
            <person name="Pan Y."/>
            <person name="Ren F."/>
            <person name="Liu X."/>
            <person name="Che Y."/>
            <person name="Liu G."/>
        </authorList>
    </citation>
    <scope>INDUCTION</scope>
</reference>
<feature type="chain" id="PRO_0000450161" description="Cytochrome P450 monooxygenase verC">
    <location>
        <begin position="1"/>
        <end position="502"/>
    </location>
</feature>
<feature type="transmembrane region" description="Helical" evidence="2">
    <location>
        <begin position="9"/>
        <end position="29"/>
    </location>
</feature>
<feature type="binding site" description="axial binding residue" evidence="1">
    <location>
        <position position="444"/>
    </location>
    <ligand>
        <name>heme</name>
        <dbReference type="ChEBI" id="CHEBI:30413"/>
    </ligand>
    <ligandPart>
        <name>Fe</name>
        <dbReference type="ChEBI" id="CHEBI:18248"/>
    </ligandPart>
</feature>
<feature type="glycosylation site" description="N-linked (GlcNAc...) asparagine" evidence="3">
    <location>
        <position position="124"/>
    </location>
</feature>
<feature type="glycosylation site" description="N-linked (GlcNAc...) asparagine" evidence="3">
    <location>
        <position position="190"/>
    </location>
</feature>
<feature type="glycosylation site" description="N-linked (GlcNAc...) asparagine" evidence="3">
    <location>
        <position position="271"/>
    </location>
</feature>
<feature type="glycosylation site" description="N-linked (GlcNAc...) asparagine" evidence="3">
    <location>
        <position position="342"/>
    </location>
</feature>
<keyword id="KW-0325">Glycoprotein</keyword>
<keyword id="KW-0349">Heme</keyword>
<keyword id="KW-0408">Iron</keyword>
<keyword id="KW-0472">Membrane</keyword>
<keyword id="KW-0479">Metal-binding</keyword>
<keyword id="KW-0503">Monooxygenase</keyword>
<keyword id="KW-0560">Oxidoreductase</keyword>
<keyword id="KW-0812">Transmembrane</keyword>
<keyword id="KW-1133">Transmembrane helix</keyword>
<proteinExistence type="evidence at transcript level"/>
<sequence length="502" mass="56554">MLSEMLGEIAALPMVSLLGAALIVVSVLGRRLLVSNIAWAITGQTPAKSLAKRSRLPGLPFKFPNGQGTEKFFGGRSAARRWRIQYGPIYAIWAGLKREVVLSTPEHVQAFYKDSHLHVKATDNNSGWLFAELLGSCVGVVSQGRWKRVRRPFEHPFSRPESLTRPKAFIHEARDYFAVLNPNIQELTINTSNDLKHCPFFMVASIFFGIHTTAQRDELKQLGPPREELFRHAFMGGMNRYAITKYLPGSALALLRQFQGKWEGFVKAAYNRSIQTGDGTIVPLFEAVNRGEMSMQELLQTLDESLFANLDVTAHAVSWNVIRIAHHQDIQQKVRIEIQANNNSEKSYENYVCRDDTLLAACVLETSRLHPVLPFSNPEAAEEDKIVGGYIIPQTDVIVDTHAINIDNPHWVDSNSFDPHRHLGQKDSSRRYNMWRFGFGPRQCLGKNVADIILRIILCEMLNTYELGLLEEEGITGVKLQPDSWIGLPNGVVQMTPLKLDE</sequence>
<name>VERC_CLORO</name>
<evidence type="ECO:0000250" key="1">
    <source>
        <dbReference type="UniProtKB" id="P04798"/>
    </source>
</evidence>
<evidence type="ECO:0000255" key="2"/>
<evidence type="ECO:0000255" key="3">
    <source>
        <dbReference type="PROSITE-ProRule" id="PRU00498"/>
    </source>
</evidence>
<evidence type="ECO:0000269" key="4">
    <source>
    </source>
</evidence>
<evidence type="ECO:0000269" key="5">
    <source>
    </source>
</evidence>
<evidence type="ECO:0000303" key="6">
    <source>
    </source>
</evidence>
<evidence type="ECO:0000305" key="7"/>
<evidence type="ECO:0000305" key="8">
    <source>
    </source>
</evidence>
<comment type="function">
    <text evidence="4 8">Cytochrome P450 monooxygenase; part of the gene cluster that mediates the biosynthesis of 11'-deoxyverticillin A, one of the dimeric epipolythiodioxopiperazines (ETPs) from the verticillin family that act as mycotoxins (PubMed:28376389). 11'-deoxyverticillin A is required for normal conidiation (PubMed:28376389). The nonribosomal peptide synthetase verP is speculated to be responsible for condensation of amino acids to form the carbon skeleton of verticillin, whereas the cluster-specific tailoring enzymes are involved in further modifications leading to the production of 11'-deoxyverticillin A (Probable).</text>
</comment>
<comment type="cofactor">
    <cofactor evidence="1">
        <name>heme</name>
        <dbReference type="ChEBI" id="CHEBI:30413"/>
    </cofactor>
</comment>
<comment type="pathway">
    <text evidence="4">Mycotoxin biosynthesis.</text>
</comment>
<comment type="subcellular location">
    <subcellularLocation>
        <location evidence="2">Membrane</location>
        <topology evidence="2">Single-pass membrane protein</topology>
    </subcellularLocation>
</comment>
<comment type="induction">
    <text evidence="5">Expression is regulated by the cluster-specific regulator verZ.</text>
</comment>
<comment type="similarity">
    <text evidence="7">Belongs to the cytochrome P450 family.</text>
</comment>
<comment type="sequence caution">
    <conflict type="erroneous gene model prediction">
        <sequence resource="EMBL-CDS" id="AQZ42162"/>
    </conflict>
</comment>
<accession>A0A1U9YHZ9</accession>
<organism>
    <name type="scientific">Clonostachys rogersoniana</name>
    <dbReference type="NCBI Taxonomy" id="122658"/>
    <lineage>
        <taxon>Eukaryota</taxon>
        <taxon>Fungi</taxon>
        <taxon>Dikarya</taxon>
        <taxon>Ascomycota</taxon>
        <taxon>Pezizomycotina</taxon>
        <taxon>Sordariomycetes</taxon>
        <taxon>Hypocreomycetidae</taxon>
        <taxon>Hypocreales</taxon>
        <taxon>Bionectriaceae</taxon>
        <taxon>Clonostachys</taxon>
    </lineage>
</organism>
<protein>
    <recommendedName>
        <fullName evidence="6">Cytochrome P450 monooxygenase verC</fullName>
        <ecNumber evidence="8">1.-.-.-</ecNumber>
    </recommendedName>
    <alternativeName>
        <fullName evidence="6">Verticillin biosynthesis cluster protein C</fullName>
    </alternativeName>
</protein>
<dbReference type="EC" id="1.-.-.-" evidence="8"/>
<dbReference type="EMBL" id="KY359203">
    <property type="protein sequence ID" value="AQZ42162.1"/>
    <property type="status" value="ALT_SEQ"/>
    <property type="molecule type" value="Genomic_DNA"/>
</dbReference>
<dbReference type="SMR" id="A0A1U9YHZ9"/>
<dbReference type="GlyCosmos" id="A0A1U9YHZ9">
    <property type="glycosylation" value="4 sites, No reported glycans"/>
</dbReference>
<dbReference type="GO" id="GO:0016020">
    <property type="term" value="C:membrane"/>
    <property type="evidence" value="ECO:0007669"/>
    <property type="project" value="UniProtKB-SubCell"/>
</dbReference>
<dbReference type="GO" id="GO:0020037">
    <property type="term" value="F:heme binding"/>
    <property type="evidence" value="ECO:0007669"/>
    <property type="project" value="InterPro"/>
</dbReference>
<dbReference type="GO" id="GO:0005506">
    <property type="term" value="F:iron ion binding"/>
    <property type="evidence" value="ECO:0007669"/>
    <property type="project" value="InterPro"/>
</dbReference>
<dbReference type="GO" id="GO:0004497">
    <property type="term" value="F:monooxygenase activity"/>
    <property type="evidence" value="ECO:0007669"/>
    <property type="project" value="UniProtKB-KW"/>
</dbReference>
<dbReference type="GO" id="GO:0016705">
    <property type="term" value="F:oxidoreductase activity, acting on paired donors, with incorporation or reduction of molecular oxygen"/>
    <property type="evidence" value="ECO:0007669"/>
    <property type="project" value="InterPro"/>
</dbReference>
<dbReference type="CDD" id="cd20615">
    <property type="entry name" value="CYP_GliC-like"/>
    <property type="match status" value="1"/>
</dbReference>
<dbReference type="Gene3D" id="1.10.630.10">
    <property type="entry name" value="Cytochrome P450"/>
    <property type="match status" value="1"/>
</dbReference>
<dbReference type="InterPro" id="IPR050479">
    <property type="entry name" value="CYP11_CYP27_families"/>
</dbReference>
<dbReference type="InterPro" id="IPR001128">
    <property type="entry name" value="Cyt_P450"/>
</dbReference>
<dbReference type="InterPro" id="IPR017972">
    <property type="entry name" value="Cyt_P450_CS"/>
</dbReference>
<dbReference type="InterPro" id="IPR002401">
    <property type="entry name" value="Cyt_P450_E_grp-I"/>
</dbReference>
<dbReference type="InterPro" id="IPR036396">
    <property type="entry name" value="Cyt_P450_sf"/>
</dbReference>
<dbReference type="PANTHER" id="PTHR24279">
    <property type="entry name" value="CYTOCHROME P450"/>
    <property type="match status" value="1"/>
</dbReference>
<dbReference type="PANTHER" id="PTHR24279:SF120">
    <property type="entry name" value="CYTOCHROME P450"/>
    <property type="match status" value="1"/>
</dbReference>
<dbReference type="Pfam" id="PF00067">
    <property type="entry name" value="p450"/>
    <property type="match status" value="1"/>
</dbReference>
<dbReference type="PRINTS" id="PR00463">
    <property type="entry name" value="EP450I"/>
</dbReference>
<dbReference type="PRINTS" id="PR00385">
    <property type="entry name" value="P450"/>
</dbReference>
<dbReference type="SUPFAM" id="SSF48264">
    <property type="entry name" value="Cytochrome P450"/>
    <property type="match status" value="1"/>
</dbReference>
<dbReference type="PROSITE" id="PS00086">
    <property type="entry name" value="CYTOCHROME_P450"/>
    <property type="match status" value="1"/>
</dbReference>
<gene>
    <name evidence="6" type="primary">verC</name>
</gene>